<protein>
    <recommendedName>
        <fullName evidence="1">Aspartate 1-decarboxylase</fullName>
        <ecNumber evidence="1">4.1.1.11</ecNumber>
    </recommendedName>
    <alternativeName>
        <fullName evidence="1">Aspartate alpha-decarboxylase</fullName>
    </alternativeName>
    <component>
        <recommendedName>
            <fullName evidence="1">Aspartate 1-decarboxylase beta chain</fullName>
        </recommendedName>
    </component>
    <component>
        <recommendedName>
            <fullName evidence="1">Aspartate 1-decarboxylase alpha chain</fullName>
        </recommendedName>
    </component>
</protein>
<sequence length="128" mass="14392">MQRHMLKSKIHRAAVTHCELHYEGSCAIDEDLLEAANIVENERIDIWNVNNGERFSTYAIKGERGSGMISLNGSAARRAQLGDLVIIAAFAMIDEQELKAGWKPDLVFVDEDNKIKGSRDHVPTQNWT</sequence>
<dbReference type="EC" id="4.1.1.11" evidence="1"/>
<dbReference type="EMBL" id="BX571965">
    <property type="protein sequence ID" value="CAH34986.1"/>
    <property type="molecule type" value="Genomic_DNA"/>
</dbReference>
<dbReference type="RefSeq" id="WP_004191357.1">
    <property type="nucleotide sequence ID" value="NZ_CP009538.1"/>
</dbReference>
<dbReference type="RefSeq" id="YP_107618.1">
    <property type="nucleotide sequence ID" value="NC_006350.1"/>
</dbReference>
<dbReference type="SMR" id="Q63W98"/>
<dbReference type="STRING" id="272560.BPSL0990"/>
<dbReference type="GeneID" id="92978462"/>
<dbReference type="KEGG" id="bps:BPSL0990"/>
<dbReference type="PATRIC" id="fig|272560.51.peg.584"/>
<dbReference type="eggNOG" id="COG0853">
    <property type="taxonomic scope" value="Bacteria"/>
</dbReference>
<dbReference type="UniPathway" id="UPA00028">
    <property type="reaction ID" value="UER00002"/>
</dbReference>
<dbReference type="Proteomes" id="UP000000605">
    <property type="component" value="Chromosome 1"/>
</dbReference>
<dbReference type="GO" id="GO:0005829">
    <property type="term" value="C:cytosol"/>
    <property type="evidence" value="ECO:0007669"/>
    <property type="project" value="TreeGrafter"/>
</dbReference>
<dbReference type="GO" id="GO:0004068">
    <property type="term" value="F:aspartate 1-decarboxylase activity"/>
    <property type="evidence" value="ECO:0007669"/>
    <property type="project" value="UniProtKB-UniRule"/>
</dbReference>
<dbReference type="GO" id="GO:0006523">
    <property type="term" value="P:alanine biosynthetic process"/>
    <property type="evidence" value="ECO:0007669"/>
    <property type="project" value="InterPro"/>
</dbReference>
<dbReference type="GO" id="GO:0015940">
    <property type="term" value="P:pantothenate biosynthetic process"/>
    <property type="evidence" value="ECO:0007669"/>
    <property type="project" value="UniProtKB-UniRule"/>
</dbReference>
<dbReference type="CDD" id="cd06919">
    <property type="entry name" value="Asp_decarbox"/>
    <property type="match status" value="1"/>
</dbReference>
<dbReference type="Gene3D" id="2.40.40.20">
    <property type="match status" value="1"/>
</dbReference>
<dbReference type="HAMAP" id="MF_00446">
    <property type="entry name" value="PanD"/>
    <property type="match status" value="1"/>
</dbReference>
<dbReference type="InterPro" id="IPR009010">
    <property type="entry name" value="Asp_de-COase-like_dom_sf"/>
</dbReference>
<dbReference type="InterPro" id="IPR003190">
    <property type="entry name" value="Asp_decarbox"/>
</dbReference>
<dbReference type="NCBIfam" id="TIGR00223">
    <property type="entry name" value="panD"/>
    <property type="match status" value="1"/>
</dbReference>
<dbReference type="PANTHER" id="PTHR21012">
    <property type="entry name" value="ASPARTATE 1-DECARBOXYLASE"/>
    <property type="match status" value="1"/>
</dbReference>
<dbReference type="PANTHER" id="PTHR21012:SF0">
    <property type="entry name" value="ASPARTATE 1-DECARBOXYLASE"/>
    <property type="match status" value="1"/>
</dbReference>
<dbReference type="Pfam" id="PF02261">
    <property type="entry name" value="Asp_decarbox"/>
    <property type="match status" value="1"/>
</dbReference>
<dbReference type="PIRSF" id="PIRSF006246">
    <property type="entry name" value="Asp_decarbox"/>
    <property type="match status" value="1"/>
</dbReference>
<dbReference type="SUPFAM" id="SSF50692">
    <property type="entry name" value="ADC-like"/>
    <property type="match status" value="1"/>
</dbReference>
<accession>Q63W98</accession>
<name>PAND_BURPS</name>
<feature type="chain" id="PRO_0000023051" description="Aspartate 1-decarboxylase beta chain" evidence="1">
    <location>
        <begin position="1"/>
        <end position="24"/>
    </location>
</feature>
<feature type="chain" id="PRO_0000023052" description="Aspartate 1-decarboxylase alpha chain" evidence="1">
    <location>
        <begin position="25"/>
        <end position="128"/>
    </location>
</feature>
<feature type="active site" description="Schiff-base intermediate with substrate; via pyruvic acid" evidence="1">
    <location>
        <position position="25"/>
    </location>
</feature>
<feature type="active site" description="Proton donor" evidence="1">
    <location>
        <position position="58"/>
    </location>
</feature>
<feature type="binding site" evidence="1">
    <location>
        <position position="57"/>
    </location>
    <ligand>
        <name>substrate</name>
    </ligand>
</feature>
<feature type="binding site" evidence="1">
    <location>
        <begin position="73"/>
        <end position="75"/>
    </location>
    <ligand>
        <name>substrate</name>
    </ligand>
</feature>
<feature type="modified residue" description="Pyruvic acid (Ser)" evidence="1">
    <location>
        <position position="25"/>
    </location>
</feature>
<comment type="function">
    <text evidence="1">Catalyzes the pyruvoyl-dependent decarboxylation of aspartate to produce beta-alanine.</text>
</comment>
<comment type="catalytic activity">
    <reaction evidence="1">
        <text>L-aspartate + H(+) = beta-alanine + CO2</text>
        <dbReference type="Rhea" id="RHEA:19497"/>
        <dbReference type="ChEBI" id="CHEBI:15378"/>
        <dbReference type="ChEBI" id="CHEBI:16526"/>
        <dbReference type="ChEBI" id="CHEBI:29991"/>
        <dbReference type="ChEBI" id="CHEBI:57966"/>
        <dbReference type="EC" id="4.1.1.11"/>
    </reaction>
</comment>
<comment type="cofactor">
    <cofactor evidence="1">
        <name>pyruvate</name>
        <dbReference type="ChEBI" id="CHEBI:15361"/>
    </cofactor>
    <text evidence="1">Binds 1 pyruvoyl group covalently per subunit.</text>
</comment>
<comment type="pathway">
    <text evidence="1">Cofactor biosynthesis; (R)-pantothenate biosynthesis; beta-alanine from L-aspartate: step 1/1.</text>
</comment>
<comment type="subunit">
    <text evidence="1">Heterooctamer of four alpha and four beta subunits.</text>
</comment>
<comment type="subcellular location">
    <subcellularLocation>
        <location evidence="1">Cytoplasm</location>
    </subcellularLocation>
</comment>
<comment type="PTM">
    <text evidence="1">Is synthesized initially as an inactive proenzyme, which is activated by self-cleavage at a specific serine bond to produce a beta-subunit with a hydroxyl group at its C-terminus and an alpha-subunit with a pyruvoyl group at its N-terminus.</text>
</comment>
<comment type="similarity">
    <text evidence="1">Belongs to the PanD family.</text>
</comment>
<organism>
    <name type="scientific">Burkholderia pseudomallei (strain K96243)</name>
    <dbReference type="NCBI Taxonomy" id="272560"/>
    <lineage>
        <taxon>Bacteria</taxon>
        <taxon>Pseudomonadati</taxon>
        <taxon>Pseudomonadota</taxon>
        <taxon>Betaproteobacteria</taxon>
        <taxon>Burkholderiales</taxon>
        <taxon>Burkholderiaceae</taxon>
        <taxon>Burkholderia</taxon>
        <taxon>pseudomallei group</taxon>
    </lineage>
</organism>
<proteinExistence type="inferred from homology"/>
<gene>
    <name evidence="1" type="primary">panD</name>
    <name type="ordered locus">BPSL0990</name>
</gene>
<keyword id="KW-0068">Autocatalytic cleavage</keyword>
<keyword id="KW-0963">Cytoplasm</keyword>
<keyword id="KW-0210">Decarboxylase</keyword>
<keyword id="KW-0456">Lyase</keyword>
<keyword id="KW-0566">Pantothenate biosynthesis</keyword>
<keyword id="KW-0670">Pyruvate</keyword>
<keyword id="KW-1185">Reference proteome</keyword>
<keyword id="KW-0704">Schiff base</keyword>
<keyword id="KW-0865">Zymogen</keyword>
<reference key="1">
    <citation type="journal article" date="2004" name="Proc. Natl. Acad. Sci. U.S.A.">
        <title>Genomic plasticity of the causative agent of melioidosis, Burkholderia pseudomallei.</title>
        <authorList>
            <person name="Holden M.T.G."/>
            <person name="Titball R.W."/>
            <person name="Peacock S.J."/>
            <person name="Cerdeno-Tarraga A.-M."/>
            <person name="Atkins T."/>
            <person name="Crossman L.C."/>
            <person name="Pitt T."/>
            <person name="Churcher C."/>
            <person name="Mungall K.L."/>
            <person name="Bentley S.D."/>
            <person name="Sebaihia M."/>
            <person name="Thomson N.R."/>
            <person name="Bason N."/>
            <person name="Beacham I.R."/>
            <person name="Brooks K."/>
            <person name="Brown K.A."/>
            <person name="Brown N.F."/>
            <person name="Challis G.L."/>
            <person name="Cherevach I."/>
            <person name="Chillingworth T."/>
            <person name="Cronin A."/>
            <person name="Crossett B."/>
            <person name="Davis P."/>
            <person name="DeShazer D."/>
            <person name="Feltwell T."/>
            <person name="Fraser A."/>
            <person name="Hance Z."/>
            <person name="Hauser H."/>
            <person name="Holroyd S."/>
            <person name="Jagels K."/>
            <person name="Keith K.E."/>
            <person name="Maddison M."/>
            <person name="Moule S."/>
            <person name="Price C."/>
            <person name="Quail M.A."/>
            <person name="Rabbinowitsch E."/>
            <person name="Rutherford K."/>
            <person name="Sanders M."/>
            <person name="Simmonds M."/>
            <person name="Songsivilai S."/>
            <person name="Stevens K."/>
            <person name="Tumapa S."/>
            <person name="Vesaratchavest M."/>
            <person name="Whitehead S."/>
            <person name="Yeats C."/>
            <person name="Barrell B.G."/>
            <person name="Oyston P.C.F."/>
            <person name="Parkhill J."/>
        </authorList>
    </citation>
    <scope>NUCLEOTIDE SEQUENCE [LARGE SCALE GENOMIC DNA]</scope>
    <source>
        <strain>K96243</strain>
    </source>
</reference>
<evidence type="ECO:0000255" key="1">
    <source>
        <dbReference type="HAMAP-Rule" id="MF_00446"/>
    </source>
</evidence>